<accession>A9W5U0</accession>
<comment type="function">
    <text evidence="1">IGPS catalyzes the conversion of PRFAR and glutamine to IGP, AICAR and glutamate. The HisF subunit catalyzes the cyclization activity that produces IGP and AICAR from PRFAR using the ammonia provided by the HisH subunit.</text>
</comment>
<comment type="catalytic activity">
    <reaction evidence="1">
        <text>5-[(5-phospho-1-deoxy-D-ribulos-1-ylimino)methylamino]-1-(5-phospho-beta-D-ribosyl)imidazole-4-carboxamide + L-glutamine = D-erythro-1-(imidazol-4-yl)glycerol 3-phosphate + 5-amino-1-(5-phospho-beta-D-ribosyl)imidazole-4-carboxamide + L-glutamate + H(+)</text>
        <dbReference type="Rhea" id="RHEA:24793"/>
        <dbReference type="ChEBI" id="CHEBI:15378"/>
        <dbReference type="ChEBI" id="CHEBI:29985"/>
        <dbReference type="ChEBI" id="CHEBI:58278"/>
        <dbReference type="ChEBI" id="CHEBI:58359"/>
        <dbReference type="ChEBI" id="CHEBI:58475"/>
        <dbReference type="ChEBI" id="CHEBI:58525"/>
        <dbReference type="EC" id="4.3.2.10"/>
    </reaction>
</comment>
<comment type="pathway">
    <text evidence="1">Amino-acid biosynthesis; L-histidine biosynthesis; L-histidine from 5-phospho-alpha-D-ribose 1-diphosphate: step 5/9.</text>
</comment>
<comment type="subunit">
    <text evidence="1">Heterodimer of HisH and HisF.</text>
</comment>
<comment type="subcellular location">
    <subcellularLocation>
        <location evidence="1">Cytoplasm</location>
    </subcellularLocation>
</comment>
<comment type="similarity">
    <text evidence="1">Belongs to the HisA/HisF family.</text>
</comment>
<protein>
    <recommendedName>
        <fullName evidence="1">Imidazole glycerol phosphate synthase subunit HisF</fullName>
        <ecNumber evidence="1">4.3.2.10</ecNumber>
    </recommendedName>
    <alternativeName>
        <fullName evidence="1">IGP synthase cyclase subunit</fullName>
    </alternativeName>
    <alternativeName>
        <fullName evidence="1">IGP synthase subunit HisF</fullName>
    </alternativeName>
    <alternativeName>
        <fullName evidence="1">ImGP synthase subunit HisF</fullName>
        <shortName evidence="1">IGPS subunit HisF</shortName>
    </alternativeName>
</protein>
<sequence>MLKTRIIPCLDVKDGRVVKGVQFLELRDAGDPVESAKAYDAAGADELCFLDITASHEARGTLLDVVSRTAEACFMPLTVGGGVRTVADVRTLLLAGADKVGINTAAVKNPDFVAEAAEKFGDQCIVVAIDAKRVSGPDEAARWEIFTHGGRNPTGIDAVEFARTVSERGAGELLVTSMDKDGTRSGYDIALTRAIADAVRVPVIASGGVGGLDDLVAGVRDGGASAVLAASIFHFGHHTVGEAKAHMAAAGLAMRLDP</sequence>
<dbReference type="EC" id="4.3.2.10" evidence="1"/>
<dbReference type="EMBL" id="CP000908">
    <property type="protein sequence ID" value="ABY30946.1"/>
    <property type="molecule type" value="Genomic_DNA"/>
</dbReference>
<dbReference type="RefSeq" id="WP_012253959.1">
    <property type="nucleotide sequence ID" value="NC_010172.1"/>
</dbReference>
<dbReference type="SMR" id="A9W5U0"/>
<dbReference type="KEGG" id="mex:Mext_2552"/>
<dbReference type="eggNOG" id="COG0107">
    <property type="taxonomic scope" value="Bacteria"/>
</dbReference>
<dbReference type="HOGENOM" id="CLU_048577_4_0_5"/>
<dbReference type="BioCyc" id="MEXT419610:MEXT_RS12865-MONOMER"/>
<dbReference type="UniPathway" id="UPA00031">
    <property type="reaction ID" value="UER00010"/>
</dbReference>
<dbReference type="GO" id="GO:0005737">
    <property type="term" value="C:cytoplasm"/>
    <property type="evidence" value="ECO:0007669"/>
    <property type="project" value="UniProtKB-SubCell"/>
</dbReference>
<dbReference type="GO" id="GO:0000107">
    <property type="term" value="F:imidazoleglycerol-phosphate synthase activity"/>
    <property type="evidence" value="ECO:0007669"/>
    <property type="project" value="UniProtKB-UniRule"/>
</dbReference>
<dbReference type="GO" id="GO:0016829">
    <property type="term" value="F:lyase activity"/>
    <property type="evidence" value="ECO:0007669"/>
    <property type="project" value="UniProtKB-KW"/>
</dbReference>
<dbReference type="GO" id="GO:0000105">
    <property type="term" value="P:L-histidine biosynthetic process"/>
    <property type="evidence" value="ECO:0007669"/>
    <property type="project" value="UniProtKB-UniRule"/>
</dbReference>
<dbReference type="CDD" id="cd04731">
    <property type="entry name" value="HisF"/>
    <property type="match status" value="1"/>
</dbReference>
<dbReference type="FunFam" id="3.20.20.70:FF:000006">
    <property type="entry name" value="Imidazole glycerol phosphate synthase subunit HisF"/>
    <property type="match status" value="1"/>
</dbReference>
<dbReference type="Gene3D" id="3.20.20.70">
    <property type="entry name" value="Aldolase class I"/>
    <property type="match status" value="1"/>
</dbReference>
<dbReference type="HAMAP" id="MF_01013">
    <property type="entry name" value="HisF"/>
    <property type="match status" value="1"/>
</dbReference>
<dbReference type="InterPro" id="IPR013785">
    <property type="entry name" value="Aldolase_TIM"/>
</dbReference>
<dbReference type="InterPro" id="IPR006062">
    <property type="entry name" value="His_biosynth"/>
</dbReference>
<dbReference type="InterPro" id="IPR004651">
    <property type="entry name" value="HisF"/>
</dbReference>
<dbReference type="InterPro" id="IPR050064">
    <property type="entry name" value="IGPS_HisA/HisF"/>
</dbReference>
<dbReference type="InterPro" id="IPR011060">
    <property type="entry name" value="RibuloseP-bd_barrel"/>
</dbReference>
<dbReference type="NCBIfam" id="TIGR00735">
    <property type="entry name" value="hisF"/>
    <property type="match status" value="1"/>
</dbReference>
<dbReference type="PANTHER" id="PTHR21235:SF2">
    <property type="entry name" value="IMIDAZOLE GLYCEROL PHOSPHATE SYNTHASE HISHF"/>
    <property type="match status" value="1"/>
</dbReference>
<dbReference type="PANTHER" id="PTHR21235">
    <property type="entry name" value="IMIDAZOLE GLYCEROL PHOSPHATE SYNTHASE SUBUNIT HISF/H IGP SYNTHASE SUBUNIT HISF/H"/>
    <property type="match status" value="1"/>
</dbReference>
<dbReference type="Pfam" id="PF00977">
    <property type="entry name" value="His_biosynth"/>
    <property type="match status" value="1"/>
</dbReference>
<dbReference type="SUPFAM" id="SSF51366">
    <property type="entry name" value="Ribulose-phoshate binding barrel"/>
    <property type="match status" value="1"/>
</dbReference>
<organism>
    <name type="scientific">Methylorubrum extorquens (strain PA1)</name>
    <name type="common">Methylobacterium extorquens</name>
    <dbReference type="NCBI Taxonomy" id="419610"/>
    <lineage>
        <taxon>Bacteria</taxon>
        <taxon>Pseudomonadati</taxon>
        <taxon>Pseudomonadota</taxon>
        <taxon>Alphaproteobacteria</taxon>
        <taxon>Hyphomicrobiales</taxon>
        <taxon>Methylobacteriaceae</taxon>
        <taxon>Methylorubrum</taxon>
    </lineage>
</organism>
<keyword id="KW-0028">Amino-acid biosynthesis</keyword>
<keyword id="KW-0963">Cytoplasm</keyword>
<keyword id="KW-0368">Histidine biosynthesis</keyword>
<keyword id="KW-0456">Lyase</keyword>
<gene>
    <name evidence="1" type="primary">hisF</name>
    <name type="ordered locus">Mext_2552</name>
</gene>
<proteinExistence type="inferred from homology"/>
<feature type="chain" id="PRO_1000190579" description="Imidazole glycerol phosphate synthase subunit HisF">
    <location>
        <begin position="1"/>
        <end position="258"/>
    </location>
</feature>
<feature type="active site" evidence="1">
    <location>
        <position position="11"/>
    </location>
</feature>
<feature type="active site" evidence="1">
    <location>
        <position position="130"/>
    </location>
</feature>
<name>HIS6_METEP</name>
<reference key="1">
    <citation type="submission" date="2007-12" db="EMBL/GenBank/DDBJ databases">
        <title>Complete sequence of Methylobacterium extorquens PA1.</title>
        <authorList>
            <consortium name="US DOE Joint Genome Institute"/>
            <person name="Copeland A."/>
            <person name="Lucas S."/>
            <person name="Lapidus A."/>
            <person name="Barry K."/>
            <person name="Glavina del Rio T."/>
            <person name="Dalin E."/>
            <person name="Tice H."/>
            <person name="Pitluck S."/>
            <person name="Saunders E."/>
            <person name="Brettin T."/>
            <person name="Bruce D."/>
            <person name="Detter J.C."/>
            <person name="Han C."/>
            <person name="Schmutz J."/>
            <person name="Larimer F."/>
            <person name="Land M."/>
            <person name="Hauser L."/>
            <person name="Kyrpides N."/>
            <person name="Kim E."/>
            <person name="Marx C."/>
            <person name="Richardson P."/>
        </authorList>
    </citation>
    <scope>NUCLEOTIDE SEQUENCE [LARGE SCALE GENOMIC DNA]</scope>
    <source>
        <strain>PA1</strain>
    </source>
</reference>
<evidence type="ECO:0000255" key="1">
    <source>
        <dbReference type="HAMAP-Rule" id="MF_01013"/>
    </source>
</evidence>